<protein>
    <recommendedName>
        <fullName>Uncharacterized protein y4pE/y4sA</fullName>
    </recommendedName>
</protein>
<reference key="1">
    <citation type="journal article" date="1997" name="Nature">
        <title>Molecular basis of symbiosis between Rhizobium and legumes.</title>
        <authorList>
            <person name="Freiberg C.A."/>
            <person name="Fellay R."/>
            <person name="Bairoch A."/>
            <person name="Broughton W.J."/>
            <person name="Rosenthal A."/>
            <person name="Perret X."/>
        </authorList>
    </citation>
    <scope>NUCLEOTIDE SEQUENCE [LARGE SCALE GENOMIC DNA]</scope>
    <source>
        <strain>NBRC 101917 / NGR234</strain>
    </source>
</reference>
<reference key="2">
    <citation type="journal article" date="2009" name="Appl. Environ. Microbiol.">
        <title>Rhizobium sp. strain NGR234 possesses a remarkable number of secretion systems.</title>
        <authorList>
            <person name="Schmeisser C."/>
            <person name="Liesegang H."/>
            <person name="Krysciak D."/>
            <person name="Bakkou N."/>
            <person name="Le Quere A."/>
            <person name="Wollherr A."/>
            <person name="Heinemeyer I."/>
            <person name="Morgenstern B."/>
            <person name="Pommerening-Roeser A."/>
            <person name="Flores M."/>
            <person name="Palacios R."/>
            <person name="Brenner S."/>
            <person name="Gottschalk G."/>
            <person name="Schmitz R.A."/>
            <person name="Broughton W.J."/>
            <person name="Perret X."/>
            <person name="Strittmatter A.W."/>
            <person name="Streit W.R."/>
        </authorList>
    </citation>
    <scope>NUCLEOTIDE SEQUENCE [LARGE SCALE GENOMIC DNA]</scope>
    <source>
        <strain>NBRC 101917 / NGR234</strain>
    </source>
</reference>
<sequence>MWAYIFGAVCPRKGKGAGLVLPYCDTEAMQEHLAEIGRSVDDGAHAVLILDQAGWHVTPKLKVPDNITLMFLPPRSPELNPVENVWQFMRDNWLSNRIFKDYDDIVTHCCAAWNKLVDQPWKIMSIGLREWAHRS</sequence>
<geneLocation type="plasmid">
    <name>sym pNGR234a</name>
</geneLocation>
<gene>
    <name type="ordered locus">NGR_a02070</name>
    <name type="ORF">y4pE</name>
</gene>
<gene>
    <name type="ordered locus">NGR_a01710</name>
    <name type="ORF">y4sA</name>
</gene>
<name>Y4PE_SINFN</name>
<proteinExistence type="predicted"/>
<keyword id="KW-0614">Plasmid</keyword>
<keyword id="KW-1185">Reference proteome</keyword>
<keyword id="KW-0814">Transposable element</keyword>
<accession>P55614</accession>
<dbReference type="EMBL" id="U00090">
    <property type="protein sequence ID" value="AAB91815.1"/>
    <property type="molecule type" value="Genomic_DNA"/>
</dbReference>
<dbReference type="EMBL" id="U00090">
    <property type="protein sequence ID" value="AAB91841.1"/>
    <property type="molecule type" value="Genomic_DNA"/>
</dbReference>
<dbReference type="RefSeq" id="NP_444018.1">
    <property type="nucleotide sequence ID" value="NC_000914.2"/>
</dbReference>
<dbReference type="RefSeq" id="NP_444054.1">
    <property type="nucleotide sequence ID" value="NC_000914.2"/>
</dbReference>
<dbReference type="KEGG" id="rhi:NGR_a01710"/>
<dbReference type="KEGG" id="rhi:NGR_a02070"/>
<dbReference type="PATRIC" id="fig|394.7.peg.165"/>
<dbReference type="eggNOG" id="COG3335">
    <property type="taxonomic scope" value="Bacteria"/>
</dbReference>
<dbReference type="HOGENOM" id="CLU_056788_6_1_5"/>
<dbReference type="OrthoDB" id="2375382at2"/>
<dbReference type="Proteomes" id="UP000001054">
    <property type="component" value="Plasmid pNGR234a"/>
</dbReference>
<dbReference type="GO" id="GO:0003676">
    <property type="term" value="F:nucleic acid binding"/>
    <property type="evidence" value="ECO:0007669"/>
    <property type="project" value="InterPro"/>
</dbReference>
<dbReference type="Gene3D" id="3.30.420.10">
    <property type="entry name" value="Ribonuclease H-like superfamily/Ribonuclease H"/>
    <property type="match status" value="1"/>
</dbReference>
<dbReference type="InterPro" id="IPR036397">
    <property type="entry name" value="RNaseH_sf"/>
</dbReference>
<dbReference type="InterPro" id="IPR038717">
    <property type="entry name" value="Tc1-like_DDE_dom"/>
</dbReference>
<dbReference type="InterPro" id="IPR047655">
    <property type="entry name" value="Transpos_IS630-like"/>
</dbReference>
<dbReference type="NCBIfam" id="NF033545">
    <property type="entry name" value="transpos_IS630"/>
    <property type="match status" value="1"/>
</dbReference>
<dbReference type="Pfam" id="PF13358">
    <property type="entry name" value="DDE_3"/>
    <property type="match status" value="1"/>
</dbReference>
<organism>
    <name type="scientific">Sinorhizobium fredii (strain NBRC 101917 / NGR234)</name>
    <dbReference type="NCBI Taxonomy" id="394"/>
    <lineage>
        <taxon>Bacteria</taxon>
        <taxon>Pseudomonadati</taxon>
        <taxon>Pseudomonadota</taxon>
        <taxon>Alphaproteobacteria</taxon>
        <taxon>Hyphomicrobiales</taxon>
        <taxon>Rhizobiaceae</taxon>
        <taxon>Sinorhizobium/Ensifer group</taxon>
        <taxon>Sinorhizobium</taxon>
    </lineage>
</organism>
<feature type="chain" id="PRO_0000200934" description="Uncharacterized protein y4pE/y4sA">
    <location>
        <begin position="1"/>
        <end position="135"/>
    </location>
</feature>